<organism>
    <name type="scientific">Fervidobacterium nodosum (strain ATCC 35602 / DSM 5306 / Rt17-B1)</name>
    <dbReference type="NCBI Taxonomy" id="381764"/>
    <lineage>
        <taxon>Bacteria</taxon>
        <taxon>Thermotogati</taxon>
        <taxon>Thermotogota</taxon>
        <taxon>Thermotogae</taxon>
        <taxon>Thermotogales</taxon>
        <taxon>Fervidobacteriaceae</taxon>
        <taxon>Fervidobacterium</taxon>
    </lineage>
</organism>
<feature type="chain" id="PRO_1000132582" description="Adenosylcobinamide-GDP ribazoletransferase">
    <location>
        <begin position="1"/>
        <end position="241"/>
    </location>
</feature>
<feature type="transmembrane region" description="Helical" evidence="1">
    <location>
        <begin position="34"/>
        <end position="54"/>
    </location>
</feature>
<feature type="transmembrane region" description="Helical" evidence="1">
    <location>
        <begin position="55"/>
        <end position="75"/>
    </location>
</feature>
<feature type="transmembrane region" description="Helical" evidence="1">
    <location>
        <begin position="109"/>
        <end position="129"/>
    </location>
</feature>
<feature type="transmembrane region" description="Helical" evidence="1">
    <location>
        <begin position="133"/>
        <end position="153"/>
    </location>
</feature>
<feature type="transmembrane region" description="Helical" evidence="1">
    <location>
        <begin position="165"/>
        <end position="185"/>
    </location>
</feature>
<feature type="transmembrane region" description="Helical" evidence="1">
    <location>
        <begin position="186"/>
        <end position="206"/>
    </location>
</feature>
<feature type="transmembrane region" description="Helical" evidence="1">
    <location>
        <begin position="221"/>
        <end position="241"/>
    </location>
</feature>
<accession>A7HMT2</accession>
<proteinExistence type="inferred from homology"/>
<keyword id="KW-0997">Cell inner membrane</keyword>
<keyword id="KW-1003">Cell membrane</keyword>
<keyword id="KW-0169">Cobalamin biosynthesis</keyword>
<keyword id="KW-0460">Magnesium</keyword>
<keyword id="KW-0472">Membrane</keyword>
<keyword id="KW-1185">Reference proteome</keyword>
<keyword id="KW-0808">Transferase</keyword>
<keyword id="KW-0812">Transmembrane</keyword>
<keyword id="KW-1133">Transmembrane helix</keyword>
<dbReference type="EC" id="2.7.8.26" evidence="1"/>
<dbReference type="EMBL" id="CP000771">
    <property type="protein sequence ID" value="ABS61215.1"/>
    <property type="molecule type" value="Genomic_DNA"/>
</dbReference>
<dbReference type="RefSeq" id="WP_011994522.1">
    <property type="nucleotide sequence ID" value="NC_009718.1"/>
</dbReference>
<dbReference type="STRING" id="381764.Fnod_1368"/>
<dbReference type="KEGG" id="fno:Fnod_1368"/>
<dbReference type="eggNOG" id="COG0368">
    <property type="taxonomic scope" value="Bacteria"/>
</dbReference>
<dbReference type="HOGENOM" id="CLU_057426_1_2_0"/>
<dbReference type="OrthoDB" id="9794626at2"/>
<dbReference type="UniPathway" id="UPA00148">
    <property type="reaction ID" value="UER00238"/>
</dbReference>
<dbReference type="Proteomes" id="UP000002415">
    <property type="component" value="Chromosome"/>
</dbReference>
<dbReference type="GO" id="GO:0005886">
    <property type="term" value="C:plasma membrane"/>
    <property type="evidence" value="ECO:0007669"/>
    <property type="project" value="UniProtKB-SubCell"/>
</dbReference>
<dbReference type="GO" id="GO:0051073">
    <property type="term" value="F:adenosylcobinamide-GDP ribazoletransferase activity"/>
    <property type="evidence" value="ECO:0007669"/>
    <property type="project" value="UniProtKB-UniRule"/>
</dbReference>
<dbReference type="GO" id="GO:0008818">
    <property type="term" value="F:cobalamin 5'-phosphate synthase activity"/>
    <property type="evidence" value="ECO:0007669"/>
    <property type="project" value="UniProtKB-UniRule"/>
</dbReference>
<dbReference type="GO" id="GO:0009236">
    <property type="term" value="P:cobalamin biosynthetic process"/>
    <property type="evidence" value="ECO:0007669"/>
    <property type="project" value="UniProtKB-UniRule"/>
</dbReference>
<dbReference type="HAMAP" id="MF_00719">
    <property type="entry name" value="CobS"/>
    <property type="match status" value="1"/>
</dbReference>
<dbReference type="InterPro" id="IPR003805">
    <property type="entry name" value="CobS"/>
</dbReference>
<dbReference type="PANTHER" id="PTHR34148">
    <property type="entry name" value="ADENOSYLCOBINAMIDE-GDP RIBAZOLETRANSFERASE"/>
    <property type="match status" value="1"/>
</dbReference>
<dbReference type="PANTHER" id="PTHR34148:SF1">
    <property type="entry name" value="ADENOSYLCOBINAMIDE-GDP RIBAZOLETRANSFERASE"/>
    <property type="match status" value="1"/>
</dbReference>
<dbReference type="Pfam" id="PF02654">
    <property type="entry name" value="CobS"/>
    <property type="match status" value="1"/>
</dbReference>
<gene>
    <name evidence="1" type="primary">cobS</name>
    <name type="ordered locus">Fnod_1368</name>
</gene>
<comment type="function">
    <text evidence="1">Joins adenosylcobinamide-GDP and alpha-ribazole to generate adenosylcobalamin (Ado-cobalamin). Also synthesizes adenosylcobalamin 5'-phosphate from adenosylcobinamide-GDP and alpha-ribazole 5'-phosphate.</text>
</comment>
<comment type="catalytic activity">
    <reaction evidence="1">
        <text>alpha-ribazole + adenosylcob(III)inamide-GDP = adenosylcob(III)alamin + GMP + H(+)</text>
        <dbReference type="Rhea" id="RHEA:16049"/>
        <dbReference type="ChEBI" id="CHEBI:10329"/>
        <dbReference type="ChEBI" id="CHEBI:15378"/>
        <dbReference type="ChEBI" id="CHEBI:18408"/>
        <dbReference type="ChEBI" id="CHEBI:58115"/>
        <dbReference type="ChEBI" id="CHEBI:60487"/>
        <dbReference type="EC" id="2.7.8.26"/>
    </reaction>
</comment>
<comment type="catalytic activity">
    <reaction evidence="1">
        <text>alpha-ribazole 5'-phosphate + adenosylcob(III)inamide-GDP = adenosylcob(III)alamin 5'-phosphate + GMP + H(+)</text>
        <dbReference type="Rhea" id="RHEA:23560"/>
        <dbReference type="ChEBI" id="CHEBI:15378"/>
        <dbReference type="ChEBI" id="CHEBI:57918"/>
        <dbReference type="ChEBI" id="CHEBI:58115"/>
        <dbReference type="ChEBI" id="CHEBI:60487"/>
        <dbReference type="ChEBI" id="CHEBI:60493"/>
        <dbReference type="EC" id="2.7.8.26"/>
    </reaction>
</comment>
<comment type="cofactor">
    <cofactor evidence="1">
        <name>Mg(2+)</name>
        <dbReference type="ChEBI" id="CHEBI:18420"/>
    </cofactor>
</comment>
<comment type="pathway">
    <text evidence="1">Cofactor biosynthesis; adenosylcobalamin biosynthesis; adenosylcobalamin from cob(II)yrinate a,c-diamide: step 7/7.</text>
</comment>
<comment type="subcellular location">
    <subcellularLocation>
        <location evidence="1">Cell inner membrane</location>
        <topology evidence="1">Multi-pass membrane protein</topology>
    </subcellularLocation>
</comment>
<comment type="similarity">
    <text evidence="1">Belongs to the CobS family.</text>
</comment>
<protein>
    <recommendedName>
        <fullName evidence="1">Adenosylcobinamide-GDP ribazoletransferase</fullName>
        <ecNumber evidence="1">2.7.8.26</ecNumber>
    </recommendedName>
    <alternativeName>
        <fullName evidence="1">Cobalamin synthase</fullName>
    </alternativeName>
    <alternativeName>
        <fullName evidence="1">Cobalamin-5'-phosphate synthase</fullName>
    </alternativeName>
</protein>
<sequence length="241" mass="26855">MQDSLKDILLTFSFISRLPVKLGELSDWEVRMKRIPAYFTIVGYIPGLIYFTGSFLSLNFGIIAPLLSIVLGFYLFDLFHFDGLLDTLDGFLNQSSKSRRLEIMSKGNVGPFAVFYGVLYVIVFWELITSIEPVAFVFGSVFGRYTMDVVLVFSKPAKNEGLGAMLFPFNRFLLVPATLFTLPLLLIDVKLFLVSIFSSWLVGFLISKVSEKQIGGVTGDVLGGSCLIGQIVVLLILNYLI</sequence>
<evidence type="ECO:0000255" key="1">
    <source>
        <dbReference type="HAMAP-Rule" id="MF_00719"/>
    </source>
</evidence>
<reference key="1">
    <citation type="submission" date="2007-07" db="EMBL/GenBank/DDBJ databases">
        <title>Complete sequence of Fervidobacterium nodosum Rt17-B1.</title>
        <authorList>
            <consortium name="US DOE Joint Genome Institute"/>
            <person name="Copeland A."/>
            <person name="Lucas S."/>
            <person name="Lapidus A."/>
            <person name="Barry K."/>
            <person name="Glavina del Rio T."/>
            <person name="Dalin E."/>
            <person name="Tice H."/>
            <person name="Pitluck S."/>
            <person name="Saunders E."/>
            <person name="Brettin T."/>
            <person name="Bruce D."/>
            <person name="Detter J.C."/>
            <person name="Han C."/>
            <person name="Schmutz J."/>
            <person name="Larimer F."/>
            <person name="Land M."/>
            <person name="Hauser L."/>
            <person name="Kyrpides N."/>
            <person name="Mikhailova N."/>
            <person name="Nelson K."/>
            <person name="Gogarten J.P."/>
            <person name="Noll K."/>
            <person name="Richardson P."/>
        </authorList>
    </citation>
    <scope>NUCLEOTIDE SEQUENCE [LARGE SCALE GENOMIC DNA]</scope>
    <source>
        <strain>ATCC 35602 / DSM 5306 / Rt17-B1</strain>
    </source>
</reference>
<name>COBS_FERNB</name>